<reference evidence="5" key="1">
    <citation type="journal article" date="2020" name="J. Biol. Chem.">
        <title>Discovery and mechanistic studies of cytotoxic cyclotides from the medicinal herb Hybanthus enneaspermus.</title>
        <authorList>
            <person name="Du Q."/>
            <person name="Chan L.Y."/>
            <person name="Gilding E.K."/>
            <person name="Henriques S.T."/>
            <person name="Condon N.D."/>
            <person name="Ravipati A.S."/>
            <person name="Kaas Q."/>
            <person name="Huang Y.H."/>
            <person name="Craik D.J."/>
        </authorList>
    </citation>
    <scope>PROTEIN SEQUENCE</scope>
    <scope>MASS SPECTROMETRY</scope>
    <scope>FUNCTION</scope>
    <scope>TISSUE SPECIFICITY</scope>
    <scope>DOMAIN</scope>
    <scope>DISULFIDE BONDS</scope>
</reference>
<name>CYHEL_PIGEN</name>
<comment type="function">
    <text evidence="2 3">Probably participates in a plant defense mechanism (By similarity). Has cytotoxic activity against HUVEC cells (LC(50)= 2.26 uM) and various cancer cells including HeLa (LC(50)= 3.48 uM), MCF-7 and K562 (PubMed:32414842). Displays very weak hemolytic activity (PubMed:32414842). Binds to and induces leakage in phospholipd membranes, particularly ones containing 1-palmitoyl-2-oleophosphatidylethanolamine (POPE) (PubMed:32414842).</text>
</comment>
<comment type="tissue specificity">
    <text evidence="3">Detected in stems (at protein level).</text>
</comment>
<comment type="domain">
    <text evidence="5">The presence of a 'disulfide through disulfide knot' structurally defines this protein as a knottin.</text>
</comment>
<comment type="PTM">
    <text evidence="2">This is a cyclic peptide.</text>
</comment>
<comment type="mass spectrometry" mass="3087.4" method="MALDI" evidence="3"/>
<comment type="similarity">
    <text evidence="2">Belongs to the cyclotide family. Bracelet subfamily.</text>
</comment>
<comment type="caution">
    <text evidence="2">This peptide is cyclic. The start position was chosen by similarity to Oak1 (kalata B1) for which the DNA sequence is known.</text>
</comment>
<protein>
    <recommendedName>
        <fullName evidence="4">Cyclotide hyen-L</fullName>
    </recommendedName>
</protein>
<organism evidence="4">
    <name type="scientific">Pigea enneasperma</name>
    <name type="common">Spade flower</name>
    <name type="synonym">Afrohybanthus enneaspermus</name>
    <dbReference type="NCBI Taxonomy" id="212266"/>
    <lineage>
        <taxon>Eukaryota</taxon>
        <taxon>Viridiplantae</taxon>
        <taxon>Streptophyta</taxon>
        <taxon>Embryophyta</taxon>
        <taxon>Tracheophyta</taxon>
        <taxon>Spermatophyta</taxon>
        <taxon>Magnoliopsida</taxon>
        <taxon>eudicotyledons</taxon>
        <taxon>Gunneridae</taxon>
        <taxon>Pentapetalae</taxon>
        <taxon>rosids</taxon>
        <taxon>fabids</taxon>
        <taxon>Malpighiales</taxon>
        <taxon>Violaceae</taxon>
        <taxon>Pigea</taxon>
    </lineage>
</organism>
<feature type="peptide" id="PRO_0000450768" description="Cyclotide hyen-L" evidence="2">
    <location>
        <begin position="1"/>
        <end position="30"/>
    </location>
</feature>
<feature type="disulfide bond" evidence="2 3">
    <location>
        <begin position="4"/>
        <end position="21"/>
    </location>
</feature>
<feature type="disulfide bond" evidence="2 3">
    <location>
        <begin position="8"/>
        <end position="23"/>
    </location>
</feature>
<feature type="disulfide bond" evidence="2 3">
    <location>
        <begin position="13"/>
        <end position="28"/>
    </location>
</feature>
<feature type="cross-link" description="Cyclopeptide (Gly-Asn)" evidence="1">
    <location>
        <begin position="1"/>
        <end position="30"/>
    </location>
</feature>
<sequence length="30" mass="3114">GIPCAESCVYIPCTVTALLGCSCSDKVCYN</sequence>
<evidence type="ECO:0000250" key="1">
    <source>
        <dbReference type="UniProtKB" id="B1NRQ8"/>
    </source>
</evidence>
<evidence type="ECO:0000255" key="2">
    <source>
        <dbReference type="PROSITE-ProRule" id="PRU00395"/>
    </source>
</evidence>
<evidence type="ECO:0000269" key="3">
    <source>
    </source>
</evidence>
<evidence type="ECO:0000303" key="4">
    <source>
    </source>
</evidence>
<evidence type="ECO:0000305" key="5"/>
<accession>C0HLP6</accession>
<keyword id="KW-0903">Direct protein sequencing</keyword>
<keyword id="KW-1015">Disulfide bond</keyword>
<keyword id="KW-0960">Knottin</keyword>
<keyword id="KW-0611">Plant defense</keyword>
<proteinExistence type="evidence at protein level"/>
<dbReference type="SMR" id="C0HLP6"/>
<dbReference type="GO" id="GO:0051715">
    <property type="term" value="P:cytolysis in another organism"/>
    <property type="evidence" value="ECO:0000314"/>
    <property type="project" value="UniProtKB"/>
</dbReference>
<dbReference type="GO" id="GO:0006952">
    <property type="term" value="P:defense response"/>
    <property type="evidence" value="ECO:0000314"/>
    <property type="project" value="UniProtKB"/>
</dbReference>
<dbReference type="InterPro" id="IPR005535">
    <property type="entry name" value="Cyclotide"/>
</dbReference>
<dbReference type="InterPro" id="IPR012323">
    <property type="entry name" value="Cyclotide_bracelet_CS"/>
</dbReference>
<dbReference type="InterPro" id="IPR036146">
    <property type="entry name" value="Cyclotide_sf"/>
</dbReference>
<dbReference type="Pfam" id="PF03784">
    <property type="entry name" value="Cyclotide"/>
    <property type="match status" value="1"/>
</dbReference>
<dbReference type="PIRSF" id="PIRSF037891">
    <property type="entry name" value="Cycloviolacin"/>
    <property type="match status" value="1"/>
</dbReference>
<dbReference type="SUPFAM" id="SSF57038">
    <property type="entry name" value="Cyclotides"/>
    <property type="match status" value="1"/>
</dbReference>
<dbReference type="PROSITE" id="PS51052">
    <property type="entry name" value="CYCLOTIDE"/>
    <property type="match status" value="1"/>
</dbReference>
<dbReference type="PROSITE" id="PS60008">
    <property type="entry name" value="CYCLOTIDE_BRACELET"/>
    <property type="match status" value="1"/>
</dbReference>